<name>RRF_DINSH</name>
<comment type="function">
    <text evidence="1">Responsible for the release of ribosomes from messenger RNA at the termination of protein biosynthesis. May increase the efficiency of translation by recycling ribosomes from one round of translation to another.</text>
</comment>
<comment type="subcellular location">
    <subcellularLocation>
        <location evidence="1">Cytoplasm</location>
    </subcellularLocation>
</comment>
<comment type="similarity">
    <text evidence="1">Belongs to the RRF family.</text>
</comment>
<protein>
    <recommendedName>
        <fullName evidence="1">Ribosome-recycling factor</fullName>
        <shortName evidence="1">RRF</shortName>
    </recommendedName>
    <alternativeName>
        <fullName evidence="1">Ribosome-releasing factor</fullName>
    </alternativeName>
</protein>
<accession>A8LK37</accession>
<gene>
    <name evidence="1" type="primary">frr</name>
    <name type="ordered locus">Dshi_1494</name>
</gene>
<dbReference type="EMBL" id="CP000830">
    <property type="protein sequence ID" value="ABV93236.1"/>
    <property type="molecule type" value="Genomic_DNA"/>
</dbReference>
<dbReference type="RefSeq" id="WP_012178166.1">
    <property type="nucleotide sequence ID" value="NC_009952.1"/>
</dbReference>
<dbReference type="SMR" id="A8LK37"/>
<dbReference type="STRING" id="398580.Dshi_1494"/>
<dbReference type="KEGG" id="dsh:Dshi_1494"/>
<dbReference type="eggNOG" id="COG0233">
    <property type="taxonomic scope" value="Bacteria"/>
</dbReference>
<dbReference type="HOGENOM" id="CLU_073981_2_0_5"/>
<dbReference type="OrthoDB" id="9804006at2"/>
<dbReference type="Proteomes" id="UP000006833">
    <property type="component" value="Chromosome"/>
</dbReference>
<dbReference type="GO" id="GO:0005829">
    <property type="term" value="C:cytosol"/>
    <property type="evidence" value="ECO:0007669"/>
    <property type="project" value="GOC"/>
</dbReference>
<dbReference type="GO" id="GO:0043023">
    <property type="term" value="F:ribosomal large subunit binding"/>
    <property type="evidence" value="ECO:0007669"/>
    <property type="project" value="TreeGrafter"/>
</dbReference>
<dbReference type="GO" id="GO:0002184">
    <property type="term" value="P:cytoplasmic translational termination"/>
    <property type="evidence" value="ECO:0007669"/>
    <property type="project" value="TreeGrafter"/>
</dbReference>
<dbReference type="CDD" id="cd00520">
    <property type="entry name" value="RRF"/>
    <property type="match status" value="1"/>
</dbReference>
<dbReference type="FunFam" id="1.10.132.20:FF:000001">
    <property type="entry name" value="Ribosome-recycling factor"/>
    <property type="match status" value="1"/>
</dbReference>
<dbReference type="FunFam" id="3.30.1360.40:FF:000001">
    <property type="entry name" value="Ribosome-recycling factor"/>
    <property type="match status" value="1"/>
</dbReference>
<dbReference type="Gene3D" id="3.30.1360.40">
    <property type="match status" value="1"/>
</dbReference>
<dbReference type="Gene3D" id="1.10.132.20">
    <property type="entry name" value="Ribosome-recycling factor"/>
    <property type="match status" value="1"/>
</dbReference>
<dbReference type="HAMAP" id="MF_00040">
    <property type="entry name" value="RRF"/>
    <property type="match status" value="1"/>
</dbReference>
<dbReference type="InterPro" id="IPR002661">
    <property type="entry name" value="Ribosome_recyc_fac"/>
</dbReference>
<dbReference type="InterPro" id="IPR023584">
    <property type="entry name" value="Ribosome_recyc_fac_dom"/>
</dbReference>
<dbReference type="InterPro" id="IPR036191">
    <property type="entry name" value="RRF_sf"/>
</dbReference>
<dbReference type="NCBIfam" id="TIGR00496">
    <property type="entry name" value="frr"/>
    <property type="match status" value="1"/>
</dbReference>
<dbReference type="PANTHER" id="PTHR20982:SF3">
    <property type="entry name" value="MITOCHONDRIAL RIBOSOME RECYCLING FACTOR PSEUDO 1"/>
    <property type="match status" value="1"/>
</dbReference>
<dbReference type="PANTHER" id="PTHR20982">
    <property type="entry name" value="RIBOSOME RECYCLING FACTOR"/>
    <property type="match status" value="1"/>
</dbReference>
<dbReference type="Pfam" id="PF01765">
    <property type="entry name" value="RRF"/>
    <property type="match status" value="1"/>
</dbReference>
<dbReference type="SUPFAM" id="SSF55194">
    <property type="entry name" value="Ribosome recycling factor, RRF"/>
    <property type="match status" value="1"/>
</dbReference>
<sequence>MSDEDFDLDLDDLKRRMDGALASLRTEFASLRTGRASASMLEPVMVDAYGQKTPINQVGTVNVPEPRMVTINVWDKSLVGKVEKAIRESGLGINPQLNGTIIMLPIPELNEERRRELTKVAAQYAEHARVAIRNVRRDGMDQLKKFKADGMSEDDHKIWSDEVQALTDAEIKKVDDALENKQSEIMQV</sequence>
<keyword id="KW-0963">Cytoplasm</keyword>
<keyword id="KW-0648">Protein biosynthesis</keyword>
<keyword id="KW-1185">Reference proteome</keyword>
<feature type="chain" id="PRO_0000341009" description="Ribosome-recycling factor">
    <location>
        <begin position="1"/>
        <end position="188"/>
    </location>
</feature>
<organism>
    <name type="scientific">Dinoroseobacter shibae (strain DSM 16493 / NCIMB 14021 / DFL 12)</name>
    <dbReference type="NCBI Taxonomy" id="398580"/>
    <lineage>
        <taxon>Bacteria</taxon>
        <taxon>Pseudomonadati</taxon>
        <taxon>Pseudomonadota</taxon>
        <taxon>Alphaproteobacteria</taxon>
        <taxon>Rhodobacterales</taxon>
        <taxon>Roseobacteraceae</taxon>
        <taxon>Dinoroseobacter</taxon>
    </lineage>
</organism>
<reference key="1">
    <citation type="journal article" date="2010" name="ISME J.">
        <title>The complete genome sequence of the algal symbiont Dinoroseobacter shibae: a hitchhiker's guide to life in the sea.</title>
        <authorList>
            <person name="Wagner-Dobler I."/>
            <person name="Ballhausen B."/>
            <person name="Berger M."/>
            <person name="Brinkhoff T."/>
            <person name="Buchholz I."/>
            <person name="Bunk B."/>
            <person name="Cypionka H."/>
            <person name="Daniel R."/>
            <person name="Drepper T."/>
            <person name="Gerdts G."/>
            <person name="Hahnke S."/>
            <person name="Han C."/>
            <person name="Jahn D."/>
            <person name="Kalhoefer D."/>
            <person name="Kiss H."/>
            <person name="Klenk H.P."/>
            <person name="Kyrpides N."/>
            <person name="Liebl W."/>
            <person name="Liesegang H."/>
            <person name="Meincke L."/>
            <person name="Pati A."/>
            <person name="Petersen J."/>
            <person name="Piekarski T."/>
            <person name="Pommerenke C."/>
            <person name="Pradella S."/>
            <person name="Pukall R."/>
            <person name="Rabus R."/>
            <person name="Stackebrandt E."/>
            <person name="Thole S."/>
            <person name="Thompson L."/>
            <person name="Tielen P."/>
            <person name="Tomasch J."/>
            <person name="von Jan M."/>
            <person name="Wanphrut N."/>
            <person name="Wichels A."/>
            <person name="Zech H."/>
            <person name="Simon M."/>
        </authorList>
    </citation>
    <scope>NUCLEOTIDE SEQUENCE [LARGE SCALE GENOMIC DNA]</scope>
    <source>
        <strain>DSM 16493 / NCIMB 14021 / DFL 12</strain>
    </source>
</reference>
<proteinExistence type="inferred from homology"/>
<evidence type="ECO:0000255" key="1">
    <source>
        <dbReference type="HAMAP-Rule" id="MF_00040"/>
    </source>
</evidence>